<organism>
    <name type="scientific">Escherichia coli O45:K1 (strain S88 / ExPEC)</name>
    <dbReference type="NCBI Taxonomy" id="585035"/>
    <lineage>
        <taxon>Bacteria</taxon>
        <taxon>Pseudomonadati</taxon>
        <taxon>Pseudomonadota</taxon>
        <taxon>Gammaproteobacteria</taxon>
        <taxon>Enterobacterales</taxon>
        <taxon>Enterobacteriaceae</taxon>
        <taxon>Escherichia</taxon>
    </lineage>
</organism>
<comment type="subunit">
    <text evidence="1">Part of the 50S ribosomal subunit.</text>
</comment>
<comment type="similarity">
    <text evidence="1">Belongs to the bacterial ribosomal protein bL31 family. Type B subfamily.</text>
</comment>
<sequence>MKPNIHPEYRTVVFHDTSVDEYFKIGSTIKTDREIELDGVTYPYVTIDVSSKSHPFYTGKLRTVASEGNVARFTQRFGRFVSTKKGA</sequence>
<protein>
    <recommendedName>
        <fullName evidence="1">Large ribosomal subunit protein bL31B</fullName>
    </recommendedName>
    <alternativeName>
        <fullName evidence="2">50S ribosomal protein L31 type B</fullName>
    </alternativeName>
</protein>
<evidence type="ECO:0000255" key="1">
    <source>
        <dbReference type="HAMAP-Rule" id="MF_00502"/>
    </source>
</evidence>
<evidence type="ECO:0000305" key="2"/>
<reference key="1">
    <citation type="journal article" date="2009" name="PLoS Genet.">
        <title>Organised genome dynamics in the Escherichia coli species results in highly diverse adaptive paths.</title>
        <authorList>
            <person name="Touchon M."/>
            <person name="Hoede C."/>
            <person name="Tenaillon O."/>
            <person name="Barbe V."/>
            <person name="Baeriswyl S."/>
            <person name="Bidet P."/>
            <person name="Bingen E."/>
            <person name="Bonacorsi S."/>
            <person name="Bouchier C."/>
            <person name="Bouvet O."/>
            <person name="Calteau A."/>
            <person name="Chiapello H."/>
            <person name="Clermont O."/>
            <person name="Cruveiller S."/>
            <person name="Danchin A."/>
            <person name="Diard M."/>
            <person name="Dossat C."/>
            <person name="Karoui M.E."/>
            <person name="Frapy E."/>
            <person name="Garry L."/>
            <person name="Ghigo J.M."/>
            <person name="Gilles A.M."/>
            <person name="Johnson J."/>
            <person name="Le Bouguenec C."/>
            <person name="Lescat M."/>
            <person name="Mangenot S."/>
            <person name="Martinez-Jehanne V."/>
            <person name="Matic I."/>
            <person name="Nassif X."/>
            <person name="Oztas S."/>
            <person name="Petit M.A."/>
            <person name="Pichon C."/>
            <person name="Rouy Z."/>
            <person name="Ruf C.S."/>
            <person name="Schneider D."/>
            <person name="Tourret J."/>
            <person name="Vacherie B."/>
            <person name="Vallenet D."/>
            <person name="Medigue C."/>
            <person name="Rocha E.P.C."/>
            <person name="Denamur E."/>
        </authorList>
    </citation>
    <scope>NUCLEOTIDE SEQUENCE [LARGE SCALE GENOMIC DNA]</scope>
    <source>
        <strain>S88 / ExPEC</strain>
    </source>
</reference>
<proteinExistence type="inferred from homology"/>
<accession>B7MCA6</accession>
<feature type="chain" id="PRO_1000126802" description="Large ribosomal subunit protein bL31B">
    <location>
        <begin position="1"/>
        <end position="87"/>
    </location>
</feature>
<gene>
    <name evidence="1" type="primary">rpmE2</name>
    <name type="ordered locus">ECS88_0292</name>
</gene>
<keyword id="KW-1185">Reference proteome</keyword>
<keyword id="KW-0687">Ribonucleoprotein</keyword>
<keyword id="KW-0689">Ribosomal protein</keyword>
<dbReference type="EMBL" id="CU928161">
    <property type="protein sequence ID" value="CAR01646.1"/>
    <property type="molecule type" value="Genomic_DNA"/>
</dbReference>
<dbReference type="RefSeq" id="WP_000803998.1">
    <property type="nucleotide sequence ID" value="NC_011742.1"/>
</dbReference>
<dbReference type="SMR" id="B7MCA6"/>
<dbReference type="KEGG" id="ecz:ECS88_0292"/>
<dbReference type="HOGENOM" id="CLU_114306_2_1_6"/>
<dbReference type="Proteomes" id="UP000000747">
    <property type="component" value="Chromosome"/>
</dbReference>
<dbReference type="GO" id="GO:1990904">
    <property type="term" value="C:ribonucleoprotein complex"/>
    <property type="evidence" value="ECO:0007669"/>
    <property type="project" value="UniProtKB-KW"/>
</dbReference>
<dbReference type="GO" id="GO:0005840">
    <property type="term" value="C:ribosome"/>
    <property type="evidence" value="ECO:0007669"/>
    <property type="project" value="UniProtKB-KW"/>
</dbReference>
<dbReference type="GO" id="GO:0003735">
    <property type="term" value="F:structural constituent of ribosome"/>
    <property type="evidence" value="ECO:0007669"/>
    <property type="project" value="InterPro"/>
</dbReference>
<dbReference type="GO" id="GO:0006412">
    <property type="term" value="P:translation"/>
    <property type="evidence" value="ECO:0007669"/>
    <property type="project" value="UniProtKB-UniRule"/>
</dbReference>
<dbReference type="FunFam" id="4.10.830.30:FF:000002">
    <property type="entry name" value="50S ribosomal protein L31 type B"/>
    <property type="match status" value="1"/>
</dbReference>
<dbReference type="Gene3D" id="4.10.830.30">
    <property type="entry name" value="Ribosomal protein L31"/>
    <property type="match status" value="1"/>
</dbReference>
<dbReference type="HAMAP" id="MF_00502">
    <property type="entry name" value="Ribosomal_bL31_2"/>
    <property type="match status" value="1"/>
</dbReference>
<dbReference type="InterPro" id="IPR034704">
    <property type="entry name" value="Ribosomal_bL28/bL31-like_sf"/>
</dbReference>
<dbReference type="InterPro" id="IPR002150">
    <property type="entry name" value="Ribosomal_bL31"/>
</dbReference>
<dbReference type="InterPro" id="IPR027493">
    <property type="entry name" value="Ribosomal_bL31_B"/>
</dbReference>
<dbReference type="InterPro" id="IPR042105">
    <property type="entry name" value="Ribosomal_bL31_sf"/>
</dbReference>
<dbReference type="NCBIfam" id="TIGR00105">
    <property type="entry name" value="L31"/>
    <property type="match status" value="1"/>
</dbReference>
<dbReference type="NCBIfam" id="NF002462">
    <property type="entry name" value="PRK01678.1"/>
    <property type="match status" value="1"/>
</dbReference>
<dbReference type="PANTHER" id="PTHR33280">
    <property type="entry name" value="50S RIBOSOMAL PROTEIN L31, CHLOROPLASTIC"/>
    <property type="match status" value="1"/>
</dbReference>
<dbReference type="PANTHER" id="PTHR33280:SF1">
    <property type="entry name" value="LARGE RIBOSOMAL SUBUNIT PROTEIN BL31C"/>
    <property type="match status" value="1"/>
</dbReference>
<dbReference type="Pfam" id="PF01197">
    <property type="entry name" value="Ribosomal_L31"/>
    <property type="match status" value="1"/>
</dbReference>
<dbReference type="PRINTS" id="PR01249">
    <property type="entry name" value="RIBOSOMALL31"/>
</dbReference>
<dbReference type="SUPFAM" id="SSF143800">
    <property type="entry name" value="L28p-like"/>
    <property type="match status" value="1"/>
</dbReference>
<dbReference type="PROSITE" id="PS01143">
    <property type="entry name" value="RIBOSOMAL_L31"/>
    <property type="match status" value="1"/>
</dbReference>
<name>RL31B_ECO45</name>